<protein>
    <recommendedName>
        <fullName evidence="1">Trp operon repressor</fullName>
    </recommendedName>
</protein>
<gene>
    <name evidence="1" type="primary">trpR</name>
    <name type="ordered locus">ECH74115_5908</name>
</gene>
<name>TRPR_ECO5E</name>
<comment type="function">
    <text evidence="1">This protein is an aporepressor. When complexed with L-tryptophan it binds the operator region of the trp operon (5'-ACTAGT-'3') and prevents the initiation of transcription. The complex also regulates trp repressor biosynthesis by binding to its regulatory region.</text>
</comment>
<comment type="subunit">
    <text evidence="1">Homodimer.</text>
</comment>
<comment type="subcellular location">
    <subcellularLocation>
        <location evidence="1">Cytoplasm</location>
    </subcellularLocation>
</comment>
<comment type="similarity">
    <text evidence="1">Belongs to the TrpR family.</text>
</comment>
<keyword id="KW-0963">Cytoplasm</keyword>
<keyword id="KW-0238">DNA-binding</keyword>
<keyword id="KW-0678">Repressor</keyword>
<keyword id="KW-0804">Transcription</keyword>
<keyword id="KW-0805">Transcription regulation</keyword>
<evidence type="ECO:0000255" key="1">
    <source>
        <dbReference type="HAMAP-Rule" id="MF_00475"/>
    </source>
</evidence>
<accession>B5Z4S5</accession>
<reference key="1">
    <citation type="journal article" date="2011" name="Proc. Natl. Acad. Sci. U.S.A.">
        <title>Genomic anatomy of Escherichia coli O157:H7 outbreaks.</title>
        <authorList>
            <person name="Eppinger M."/>
            <person name="Mammel M.K."/>
            <person name="Leclerc J.E."/>
            <person name="Ravel J."/>
            <person name="Cebula T.A."/>
        </authorList>
    </citation>
    <scope>NUCLEOTIDE SEQUENCE [LARGE SCALE GENOMIC DNA]</scope>
    <source>
        <strain>EC4115 / EHEC</strain>
    </source>
</reference>
<feature type="chain" id="PRO_1000197144" description="Trp operon repressor">
    <location>
        <begin position="1"/>
        <end position="108"/>
    </location>
</feature>
<feature type="DNA-binding region" evidence="1">
    <location>
        <begin position="68"/>
        <end position="91"/>
    </location>
</feature>
<proteinExistence type="inferred from homology"/>
<organism>
    <name type="scientific">Escherichia coli O157:H7 (strain EC4115 / EHEC)</name>
    <dbReference type="NCBI Taxonomy" id="444450"/>
    <lineage>
        <taxon>Bacteria</taxon>
        <taxon>Pseudomonadati</taxon>
        <taxon>Pseudomonadota</taxon>
        <taxon>Gammaproteobacteria</taxon>
        <taxon>Enterobacterales</taxon>
        <taxon>Enterobacteriaceae</taxon>
        <taxon>Escherichia</taxon>
    </lineage>
</organism>
<dbReference type="EMBL" id="CP001164">
    <property type="protein sequence ID" value="ACI39743.1"/>
    <property type="molecule type" value="Genomic_DNA"/>
</dbReference>
<dbReference type="RefSeq" id="WP_000068679.1">
    <property type="nucleotide sequence ID" value="NC_011353.1"/>
</dbReference>
<dbReference type="SMR" id="B5Z4S5"/>
<dbReference type="GeneID" id="93777452"/>
<dbReference type="KEGG" id="ecf:ECH74115_5908"/>
<dbReference type="HOGENOM" id="CLU_147939_0_0_6"/>
<dbReference type="GO" id="GO:0005737">
    <property type="term" value="C:cytoplasm"/>
    <property type="evidence" value="ECO:0007669"/>
    <property type="project" value="UniProtKB-SubCell"/>
</dbReference>
<dbReference type="GO" id="GO:0003700">
    <property type="term" value="F:DNA-binding transcription factor activity"/>
    <property type="evidence" value="ECO:0007669"/>
    <property type="project" value="InterPro"/>
</dbReference>
<dbReference type="GO" id="GO:0043565">
    <property type="term" value="F:sequence-specific DNA binding"/>
    <property type="evidence" value="ECO:0007669"/>
    <property type="project" value="InterPro"/>
</dbReference>
<dbReference type="GO" id="GO:0045892">
    <property type="term" value="P:negative regulation of DNA-templated transcription"/>
    <property type="evidence" value="ECO:0007669"/>
    <property type="project" value="UniProtKB-UniRule"/>
</dbReference>
<dbReference type="FunFam" id="1.10.1270.10:FF:000001">
    <property type="entry name" value="Trp operon repressor"/>
    <property type="match status" value="1"/>
</dbReference>
<dbReference type="Gene3D" id="1.10.1270.10">
    <property type="entry name" value="TrpR-like"/>
    <property type="match status" value="1"/>
</dbReference>
<dbReference type="HAMAP" id="MF_00475">
    <property type="entry name" value="Trp_repressor"/>
    <property type="match status" value="1"/>
</dbReference>
<dbReference type="InterPro" id="IPR000831">
    <property type="entry name" value="Trp_repress"/>
</dbReference>
<dbReference type="InterPro" id="IPR013335">
    <property type="entry name" value="Trp_repress_bac"/>
</dbReference>
<dbReference type="InterPro" id="IPR010921">
    <property type="entry name" value="Trp_repressor/repl_initiator"/>
</dbReference>
<dbReference type="InterPro" id="IPR038116">
    <property type="entry name" value="TrpR-like_sf"/>
</dbReference>
<dbReference type="NCBIfam" id="TIGR01321">
    <property type="entry name" value="TrpR"/>
    <property type="match status" value="1"/>
</dbReference>
<dbReference type="PANTHER" id="PTHR38025">
    <property type="entry name" value="TRP OPERON REPRESSOR"/>
    <property type="match status" value="1"/>
</dbReference>
<dbReference type="PANTHER" id="PTHR38025:SF1">
    <property type="entry name" value="TRP OPERON REPRESSOR"/>
    <property type="match status" value="1"/>
</dbReference>
<dbReference type="Pfam" id="PF01371">
    <property type="entry name" value="Trp_repressor"/>
    <property type="match status" value="1"/>
</dbReference>
<dbReference type="PIRSF" id="PIRSF003196">
    <property type="entry name" value="Trp_repressor"/>
    <property type="match status" value="1"/>
</dbReference>
<dbReference type="SUPFAM" id="SSF48295">
    <property type="entry name" value="TrpR-like"/>
    <property type="match status" value="1"/>
</dbReference>
<sequence>MAQQSPYSAAMAEQRHQEWLRFVDLLKNAYQNDLHLPLLNLMLTPDEREALGTRVRIVEELLRGEMSQRELKNELGAGIATITRGSNSLKAAPVELRQWLEEVLLKSD</sequence>